<comment type="function">
    <text evidence="5 8 11 12 13">Phosphorylates 'Ser-10' of histone H3. May regulate gene expression by establishing or maintaining the structure of more open chromatin regions. Also required for normal polytene chromosome structure, for oogenesis and for viability throughout development. Regulates the structure of polytene chromosomes in salivary glands. May phosphorylate 'Ser-1' of histone H2A.</text>
</comment>
<comment type="catalytic activity">
    <reaction evidence="5">
        <text>L-seryl-[protein] + ATP = O-phospho-L-seryl-[protein] + ADP + H(+)</text>
        <dbReference type="Rhea" id="RHEA:17989"/>
        <dbReference type="Rhea" id="RHEA-COMP:9863"/>
        <dbReference type="Rhea" id="RHEA-COMP:11604"/>
        <dbReference type="ChEBI" id="CHEBI:15378"/>
        <dbReference type="ChEBI" id="CHEBI:29999"/>
        <dbReference type="ChEBI" id="CHEBI:30616"/>
        <dbReference type="ChEBI" id="CHEBI:83421"/>
        <dbReference type="ChEBI" id="CHEBI:456216"/>
        <dbReference type="EC" id="2.7.11.1"/>
    </reaction>
</comment>
<comment type="catalytic activity">
    <reaction evidence="5">
        <text>L-threonyl-[protein] + ATP = O-phospho-L-threonyl-[protein] + ADP + H(+)</text>
        <dbReference type="Rhea" id="RHEA:46608"/>
        <dbReference type="Rhea" id="RHEA-COMP:11060"/>
        <dbReference type="Rhea" id="RHEA-COMP:11605"/>
        <dbReference type="ChEBI" id="CHEBI:15378"/>
        <dbReference type="ChEBI" id="CHEBI:30013"/>
        <dbReference type="ChEBI" id="CHEBI:30616"/>
        <dbReference type="ChEBI" id="CHEBI:61977"/>
        <dbReference type="ChEBI" id="CHEBI:456216"/>
        <dbReference type="EC" id="2.7.11.1"/>
    </reaction>
</comment>
<comment type="cofactor">
    <cofactor evidence="5">
        <name>Mg(2+)</name>
        <dbReference type="ChEBI" id="CHEBI:18420"/>
    </cofactor>
</comment>
<comment type="subunit">
    <text evidence="7 10">Interacts with lola. Interacts with proteins of the male specific lethal (MSL) dosage compensation complex; this interaction is mediated by the kinase domains.</text>
</comment>
<comment type="subcellular location">
    <subcellularLocation>
        <location evidence="5">Nucleus</location>
    </subcellularLocation>
    <subcellularLocation>
        <location evidence="5">Chromosome</location>
    </subcellularLocation>
    <text>Associates with chromosomes throughout the cell cycle. Localizes to interband regions along the polytene chromosomes and is enriched almost two-fold on the male X chromosome compared to the autosome.</text>
</comment>
<comment type="PTM">
    <text evidence="5 14">Autophosphorylated in vitro.</text>
</comment>
<comment type="similarity">
    <text evidence="2">Belongs to the protein kinase superfamily. Ser/Thr protein kinase family.</text>
</comment>
<comment type="sequence caution" evidence="15">
    <conflict type="erroneous initiation">
        <sequence resource="EMBL-CDS" id="AAL28591"/>
    </conflict>
</comment>
<feature type="chain" id="PRO_0000086039" description="Chromosomal serine/threonine-protein kinase JIL-1">
    <location>
        <begin position="1"/>
        <end position="1207"/>
    </location>
</feature>
<feature type="domain" description="Protein kinase 1" evidence="2">
    <location>
        <begin position="261"/>
        <end position="530"/>
    </location>
</feature>
<feature type="domain" description="AGC-kinase C-terminal" evidence="3">
    <location>
        <begin position="531"/>
        <end position="599"/>
    </location>
</feature>
<feature type="domain" description="Protein kinase 2" evidence="2">
    <location>
        <begin position="623"/>
        <end position="886"/>
    </location>
</feature>
<feature type="region of interest" description="Disordered" evidence="4">
    <location>
        <begin position="1"/>
        <end position="119"/>
    </location>
</feature>
<feature type="region of interest" description="Disordered" evidence="4">
    <location>
        <begin position="164"/>
        <end position="183"/>
    </location>
</feature>
<feature type="region of interest" description="Disordered" evidence="4">
    <location>
        <begin position="210"/>
        <end position="230"/>
    </location>
</feature>
<feature type="region of interest" description="Disordered" evidence="4">
    <location>
        <begin position="1168"/>
        <end position="1197"/>
    </location>
</feature>
<feature type="compositionally biased region" description="Polar residues" evidence="4">
    <location>
        <begin position="1"/>
        <end position="19"/>
    </location>
</feature>
<feature type="compositionally biased region" description="Polar residues" evidence="4">
    <location>
        <begin position="45"/>
        <end position="69"/>
    </location>
</feature>
<feature type="compositionally biased region" description="Low complexity" evidence="4">
    <location>
        <begin position="88"/>
        <end position="97"/>
    </location>
</feature>
<feature type="compositionally biased region" description="Polar residues" evidence="4">
    <location>
        <begin position="98"/>
        <end position="108"/>
    </location>
</feature>
<feature type="compositionally biased region" description="Low complexity" evidence="4">
    <location>
        <begin position="109"/>
        <end position="118"/>
    </location>
</feature>
<feature type="compositionally biased region" description="Acidic residues" evidence="4">
    <location>
        <begin position="164"/>
        <end position="178"/>
    </location>
</feature>
<feature type="compositionally biased region" description="Polar residues" evidence="4">
    <location>
        <begin position="213"/>
        <end position="226"/>
    </location>
</feature>
<feature type="active site" description="Proton acceptor" evidence="1">
    <location>
        <position position="389"/>
    </location>
</feature>
<feature type="active site" description="Proton acceptor" evidence="1">
    <location>
        <position position="739"/>
    </location>
</feature>
<feature type="binding site" evidence="2">
    <location>
        <begin position="267"/>
        <end position="275"/>
    </location>
    <ligand>
        <name>ATP</name>
        <dbReference type="ChEBI" id="CHEBI:30616"/>
    </ligand>
</feature>
<feature type="binding site" evidence="2">
    <location>
        <position position="293"/>
    </location>
    <ligand>
        <name>ATP</name>
        <dbReference type="ChEBI" id="CHEBI:30616"/>
    </ligand>
</feature>
<feature type="binding site" evidence="2">
    <location>
        <begin position="629"/>
        <end position="637"/>
    </location>
    <ligand>
        <name>ATP</name>
        <dbReference type="ChEBI" id="CHEBI:30616"/>
    </ligand>
</feature>
<feature type="binding site" evidence="2">
    <location>
        <position position="652"/>
    </location>
    <ligand>
        <name>ATP</name>
        <dbReference type="ChEBI" id="CHEBI:30616"/>
    </ligand>
</feature>
<feature type="modified residue" description="Phosphoserine" evidence="14">
    <location>
        <position position="29"/>
    </location>
</feature>
<feature type="modified residue" description="Phosphoserine" evidence="14">
    <location>
        <position position="31"/>
    </location>
</feature>
<feature type="modified residue" description="Phosphoserine" evidence="14">
    <location>
        <position position="424"/>
    </location>
</feature>
<feature type="modified residue" description="Phosphothreonine" evidence="14">
    <location>
        <position position="588"/>
    </location>
</feature>
<feature type="modified residue" description="Phosphothreonine" evidence="14">
    <location>
        <position position="1045"/>
    </location>
</feature>
<feature type="modified residue" description="Phosphoserine" evidence="14">
    <location>
        <position position="1047"/>
    </location>
</feature>
<name>JIL1_DROME</name>
<gene>
    <name evidence="19" type="primary">JIL-1</name>
    <name type="ORF">CG6297</name>
</gene>
<sequence length="1207" mass="137045">MSRLQKQNYEILSGTSTSRLKNHQHPRESESLAYEEPDQMVRNHLNGQLVANGNGKTRKNSNSETMTNGKKSKLNTEGSGSGSGKTLNYNNNNNNNNSISATNGQYTNSSSKTTSASARDYTYRETISPPTPPSPPTTNVADIVCISDAESEDGRDPEREYYDQDMEEDEPNGIEIDESSSSLSKAKSNNAAAAAAAAAAAAAAAASKASSSTTPSYAMPTSNSTPLDLDNEAHQRDLEAVTDLKYYVKLYSDEAVSLNDFKIIRVLGTGAYGRVFLVRKLTRHDAGKLYAMKVLNKITVVQKRKTAEHTKTERVVLEAIQRNPFLVSLHYAFQSSSKLYLVLDFANGGELFTHLYHSENFEESRVRVYIAEVVLALEQLHQLGIIYRDIKLENILLDGEGHIVLSDFGLSKILTAENEYRAHSFCGTLEYMAPEIIRTGPPGHDSAVDWWSVGVLTFELLTGASPFATSDGQVQQSEISRRIQKEQPMIPSSFSANARDFVLKMLEKNPKRRLGGNHRDASEIKEHPFFNGINWQELRTKRRKAPYKPTLTAEDDVQNFSNEFTDQVPEDPECDAPPSRIRLFRGYTYVAPEHLEQMRRDNHCEIQYFNTGLQNIPCRPDDLELGTRTSNGAYGTCHFVVDSSTDLVFLAKIIPLSKFRPSEVDALISCALDTTNHKNIVSYHGTFREKCETWIVMEYLSGPELTASIRMDEDSCREIFLQLVMAVRHIHSKHFIHGDLKPENIMFENREDRTVKLIDFGSACYNNRFKSWKDKPRYTLDYAPPEMLADANLVTYSPAVDIYGLGATLYTMLVGHRPYRQNEDDVDHSAAAHHELRKRMRRGTFNQRSMRWESASPAFRHLVSWCLQRDPADRPTLSDILDSEWLQYGSNDPDVDIILPQQMVVDLSEDTMEQPTGGMFDDQQQLEFMHDKSAEDEGITLVSEPMDTTVATHESRRNAAAFSSVVAPTTDDEIVHERFDPAFEVQADFYGFDENAPPLPLPEEYYSELPLPEEDRQYIPPPPALIPVEPETTFRRPRTRQQRRTESQLVQPVSVATYEDSKASLRVLMQQLPPPGDNVVARIPKRTHRVVRTLPPTFGTTKREENFYGFSKTAISWRKTRASWRHFCLLINGVQQVLKVRFKKARRVYCLPHIKEEKLDHAYEKPLTFPRPKAQLKRTKREPKVPRPPTRVQPERARAMRQLYQFQ</sequence>
<reference evidence="15 16" key="1">
    <citation type="journal article" date="1999" name="Mol. Cell">
        <title>JIL-1: a novel chromosomal tandem kinase implicated in transcriptional regulation in Drosophila.</title>
        <authorList>
            <person name="Jin Y."/>
            <person name="Wang Y."/>
            <person name="Walker D.L."/>
            <person name="Dong H."/>
            <person name="Conley C."/>
            <person name="Johansen J."/>
            <person name="Johansen K.M."/>
        </authorList>
    </citation>
    <scope>NUCLEOTIDE SEQUENCE [MRNA]</scope>
    <scope>FUNCTION</scope>
    <scope>CATALYTIC ACTIVITY</scope>
    <scope>SUBCELLULAR LOCATION</scope>
    <scope>AUTOPHOSPHORYLATION</scope>
</reference>
<reference evidence="17" key="2">
    <citation type="journal article" date="2000" name="Science">
        <title>The genome sequence of Drosophila melanogaster.</title>
        <authorList>
            <person name="Adams M.D."/>
            <person name="Celniker S.E."/>
            <person name="Holt R.A."/>
            <person name="Evans C.A."/>
            <person name="Gocayne J.D."/>
            <person name="Amanatides P.G."/>
            <person name="Scherer S.E."/>
            <person name="Li P.W."/>
            <person name="Hoskins R.A."/>
            <person name="Galle R.F."/>
            <person name="George R.A."/>
            <person name="Lewis S.E."/>
            <person name="Richards S."/>
            <person name="Ashburner M."/>
            <person name="Henderson S.N."/>
            <person name="Sutton G.G."/>
            <person name="Wortman J.R."/>
            <person name="Yandell M.D."/>
            <person name="Zhang Q."/>
            <person name="Chen L.X."/>
            <person name="Brandon R.C."/>
            <person name="Rogers Y.-H.C."/>
            <person name="Blazej R.G."/>
            <person name="Champe M."/>
            <person name="Pfeiffer B.D."/>
            <person name="Wan K.H."/>
            <person name="Doyle C."/>
            <person name="Baxter E.G."/>
            <person name="Helt G."/>
            <person name="Nelson C.R."/>
            <person name="Miklos G.L.G."/>
            <person name="Abril J.F."/>
            <person name="Agbayani A."/>
            <person name="An H.-J."/>
            <person name="Andrews-Pfannkoch C."/>
            <person name="Baldwin D."/>
            <person name="Ballew R.M."/>
            <person name="Basu A."/>
            <person name="Baxendale J."/>
            <person name="Bayraktaroglu L."/>
            <person name="Beasley E.M."/>
            <person name="Beeson K.Y."/>
            <person name="Benos P.V."/>
            <person name="Berman B.P."/>
            <person name="Bhandari D."/>
            <person name="Bolshakov S."/>
            <person name="Borkova D."/>
            <person name="Botchan M.R."/>
            <person name="Bouck J."/>
            <person name="Brokstein P."/>
            <person name="Brottier P."/>
            <person name="Burtis K.C."/>
            <person name="Busam D.A."/>
            <person name="Butler H."/>
            <person name="Cadieu E."/>
            <person name="Center A."/>
            <person name="Chandra I."/>
            <person name="Cherry J.M."/>
            <person name="Cawley S."/>
            <person name="Dahlke C."/>
            <person name="Davenport L.B."/>
            <person name="Davies P."/>
            <person name="de Pablos B."/>
            <person name="Delcher A."/>
            <person name="Deng Z."/>
            <person name="Mays A.D."/>
            <person name="Dew I."/>
            <person name="Dietz S.M."/>
            <person name="Dodson K."/>
            <person name="Doup L.E."/>
            <person name="Downes M."/>
            <person name="Dugan-Rocha S."/>
            <person name="Dunkov B.C."/>
            <person name="Dunn P."/>
            <person name="Durbin K.J."/>
            <person name="Evangelista C.C."/>
            <person name="Ferraz C."/>
            <person name="Ferriera S."/>
            <person name="Fleischmann W."/>
            <person name="Fosler C."/>
            <person name="Gabrielian A.E."/>
            <person name="Garg N.S."/>
            <person name="Gelbart W.M."/>
            <person name="Glasser K."/>
            <person name="Glodek A."/>
            <person name="Gong F."/>
            <person name="Gorrell J.H."/>
            <person name="Gu Z."/>
            <person name="Guan P."/>
            <person name="Harris M."/>
            <person name="Harris N.L."/>
            <person name="Harvey D.A."/>
            <person name="Heiman T.J."/>
            <person name="Hernandez J.R."/>
            <person name="Houck J."/>
            <person name="Hostin D."/>
            <person name="Houston K.A."/>
            <person name="Howland T.J."/>
            <person name="Wei M.-H."/>
            <person name="Ibegwam C."/>
            <person name="Jalali M."/>
            <person name="Kalush F."/>
            <person name="Karpen G.H."/>
            <person name="Ke Z."/>
            <person name="Kennison J.A."/>
            <person name="Ketchum K.A."/>
            <person name="Kimmel B.E."/>
            <person name="Kodira C.D."/>
            <person name="Kraft C.L."/>
            <person name="Kravitz S."/>
            <person name="Kulp D."/>
            <person name="Lai Z."/>
            <person name="Lasko P."/>
            <person name="Lei Y."/>
            <person name="Levitsky A.A."/>
            <person name="Li J.H."/>
            <person name="Li Z."/>
            <person name="Liang Y."/>
            <person name="Lin X."/>
            <person name="Liu X."/>
            <person name="Mattei B."/>
            <person name="McIntosh T.C."/>
            <person name="McLeod M.P."/>
            <person name="McPherson D."/>
            <person name="Merkulov G."/>
            <person name="Milshina N.V."/>
            <person name="Mobarry C."/>
            <person name="Morris J."/>
            <person name="Moshrefi A."/>
            <person name="Mount S.M."/>
            <person name="Moy M."/>
            <person name="Murphy B."/>
            <person name="Murphy L."/>
            <person name="Muzny D.M."/>
            <person name="Nelson D.L."/>
            <person name="Nelson D.R."/>
            <person name="Nelson K.A."/>
            <person name="Nixon K."/>
            <person name="Nusskern D.R."/>
            <person name="Pacleb J.M."/>
            <person name="Palazzolo M."/>
            <person name="Pittman G.S."/>
            <person name="Pan S."/>
            <person name="Pollard J."/>
            <person name="Puri V."/>
            <person name="Reese M.G."/>
            <person name="Reinert K."/>
            <person name="Remington K."/>
            <person name="Saunders R.D.C."/>
            <person name="Scheeler F."/>
            <person name="Shen H."/>
            <person name="Shue B.C."/>
            <person name="Siden-Kiamos I."/>
            <person name="Simpson M."/>
            <person name="Skupski M.P."/>
            <person name="Smith T.J."/>
            <person name="Spier E."/>
            <person name="Spradling A.C."/>
            <person name="Stapleton M."/>
            <person name="Strong R."/>
            <person name="Sun E."/>
            <person name="Svirskas R."/>
            <person name="Tector C."/>
            <person name="Turner R."/>
            <person name="Venter E."/>
            <person name="Wang A.H."/>
            <person name="Wang X."/>
            <person name="Wang Z.-Y."/>
            <person name="Wassarman D.A."/>
            <person name="Weinstock G.M."/>
            <person name="Weissenbach J."/>
            <person name="Williams S.M."/>
            <person name="Woodage T."/>
            <person name="Worley K.C."/>
            <person name="Wu D."/>
            <person name="Yang S."/>
            <person name="Yao Q.A."/>
            <person name="Ye J."/>
            <person name="Yeh R.-F."/>
            <person name="Zaveri J.S."/>
            <person name="Zhan M."/>
            <person name="Zhang G."/>
            <person name="Zhao Q."/>
            <person name="Zheng L."/>
            <person name="Zheng X.H."/>
            <person name="Zhong F.N."/>
            <person name="Zhong W."/>
            <person name="Zhou X."/>
            <person name="Zhu S.C."/>
            <person name="Zhu X."/>
            <person name="Smith H.O."/>
            <person name="Gibbs R.A."/>
            <person name="Myers E.W."/>
            <person name="Rubin G.M."/>
            <person name="Venter J.C."/>
        </authorList>
    </citation>
    <scope>NUCLEOTIDE SEQUENCE [LARGE SCALE GENOMIC DNA]</scope>
    <source>
        <strain evidence="6">Berkeley</strain>
    </source>
</reference>
<reference evidence="15 17" key="3">
    <citation type="journal article" date="2002" name="Genome Biol.">
        <title>Annotation of the Drosophila melanogaster euchromatic genome: a systematic review.</title>
        <authorList>
            <person name="Misra S."/>
            <person name="Crosby M.A."/>
            <person name="Mungall C.J."/>
            <person name="Matthews B.B."/>
            <person name="Campbell K.S."/>
            <person name="Hradecky P."/>
            <person name="Huang Y."/>
            <person name="Kaminker J.S."/>
            <person name="Millburn G.H."/>
            <person name="Prochnik S.E."/>
            <person name="Smith C.D."/>
            <person name="Tupy J.L."/>
            <person name="Whitfield E.J."/>
            <person name="Bayraktaroglu L."/>
            <person name="Berman B.P."/>
            <person name="Bettencourt B.R."/>
            <person name="Celniker S.E."/>
            <person name="de Grey A.D.N.J."/>
            <person name="Drysdale R.A."/>
            <person name="Harris N.L."/>
            <person name="Richter J."/>
            <person name="Russo S."/>
            <person name="Schroeder A.J."/>
            <person name="Shu S.Q."/>
            <person name="Stapleton M."/>
            <person name="Yamada C."/>
            <person name="Ashburner M."/>
            <person name="Gelbart W.M."/>
            <person name="Rubin G.M."/>
            <person name="Lewis S.E."/>
        </authorList>
    </citation>
    <scope>GENOME REANNOTATION</scope>
    <source>
        <strain>Berkeley</strain>
    </source>
</reference>
<reference key="4">
    <citation type="submission" date="2008-09" db="EMBL/GenBank/DDBJ databases">
        <authorList>
            <person name="Carlson J.W."/>
            <person name="Booth B."/>
            <person name="Frise E."/>
            <person name="Park S."/>
            <person name="Wan K.H."/>
            <person name="Yu C."/>
            <person name="Celniker S.E."/>
        </authorList>
    </citation>
    <scope>NUCLEOTIDE SEQUENCE [LARGE SCALE MRNA]</scope>
    <source>
        <strain>Berkeley</strain>
        <tissue>Testis</tissue>
    </source>
</reference>
<reference evidence="15 18" key="5">
    <citation type="journal article" date="2002" name="Genome Biol.">
        <title>A Drosophila full-length cDNA resource.</title>
        <authorList>
            <person name="Stapleton M."/>
            <person name="Carlson J.W."/>
            <person name="Brokstein P."/>
            <person name="Yu C."/>
            <person name="Champe M."/>
            <person name="George R.A."/>
            <person name="Guarin H."/>
            <person name="Kronmiller B."/>
            <person name="Pacleb J.M."/>
            <person name="Park S."/>
            <person name="Wan K.H."/>
            <person name="Rubin G.M."/>
            <person name="Celniker S.E."/>
        </authorList>
    </citation>
    <scope>NUCLEOTIDE SEQUENCE [LARGE SCALE MRNA] OF 962-1207</scope>
    <source>
        <strain evidence="18">Berkeley</strain>
        <tissue evidence="9">Embryo</tissue>
    </source>
</reference>
<reference evidence="15" key="6">
    <citation type="journal article" date="2000" name="J. Cell Biol.">
        <title>JIL-1, a chromosomal kinase implicated in regulation of chromatin structure, associates with the male specific lethal (MSL) dosage compensation complex.</title>
        <authorList>
            <person name="Jin Y."/>
            <person name="Wang Y."/>
            <person name="Johansen J."/>
            <person name="Johansen K.M."/>
        </authorList>
    </citation>
    <scope>ASSOCIATION WITH THE MSL DOSAGE COMPENSATION COMPLEX</scope>
</reference>
<reference evidence="15" key="7">
    <citation type="journal article" date="2001" name="Cell">
        <title>The JIL-1 tandem kinase mediates histone H3 phosphorylation and is required for maintenance of chromatin structure in Drosophila.</title>
        <authorList>
            <person name="Wang Y."/>
            <person name="Zhang W."/>
            <person name="Jin Y."/>
            <person name="Johansen J."/>
            <person name="Johansen K.M."/>
        </authorList>
    </citation>
    <scope>FUNCTION</scope>
</reference>
<reference evidence="15" key="8">
    <citation type="journal article" date="2003" name="Genetics">
        <title>Genetic and phenotypic analysis of alleles of the Drosophila chromosomal JIL-1 kinase reveals a functional requirement at multiple developmental stages.</title>
        <authorList>
            <person name="Zhang W."/>
            <person name="Jin Y."/>
            <person name="Ji Y."/>
            <person name="Girton J."/>
            <person name="Johansen J."/>
            <person name="Johansen K.M."/>
        </authorList>
    </citation>
    <scope>FUNCTION</scope>
</reference>
<reference evidence="15" key="9">
    <citation type="journal article" date="2003" name="J. Biol. Chem.">
        <title>A developmentally regulated splice variant from the complex lola locus encoding multiple different zinc finger domain proteins interacts with the chromosomal kinase JIL-1.</title>
        <authorList>
            <person name="Zhang W."/>
            <person name="Wang Y."/>
            <person name="Long J."/>
            <person name="Girton J."/>
            <person name="Johansen J."/>
            <person name="Johansen K.M."/>
        </authorList>
    </citation>
    <scope>INTERACTION WITH LOLA</scope>
</reference>
<reference key="10">
    <citation type="journal article" date="2004" name="Genes Dev.">
        <title>Su(var) genes regulate the balance between euchromatin and heterochromatin in Drosophila.</title>
        <authorList>
            <person name="Ebert A."/>
            <person name="Schotta G."/>
            <person name="Lein S."/>
            <person name="Kubicek S."/>
            <person name="Krauss V."/>
            <person name="Jenuwein T."/>
            <person name="Reuter G."/>
        </authorList>
    </citation>
    <scope>FUNCTION</scope>
</reference>
<reference key="11">
    <citation type="journal article" date="2005" name="Chromosoma">
        <title>The JIL-1 kinase regulates the structure of Drosophila polytene chromosomes.</title>
        <authorList>
            <person name="Deng H."/>
            <person name="Zhang W."/>
            <person name="Bao X."/>
            <person name="Martin J.N."/>
            <person name="Girton J."/>
            <person name="Johansen J."/>
            <person name="Johansen K.M."/>
        </authorList>
    </citation>
    <scope>FUNCTION</scope>
</reference>
<reference key="12">
    <citation type="journal article" date="2008" name="J. Proteome Res.">
        <title>Phosphoproteome analysis of Drosophila melanogaster embryos.</title>
        <authorList>
            <person name="Zhai B."/>
            <person name="Villen J."/>
            <person name="Beausoleil S.A."/>
            <person name="Mintseris J."/>
            <person name="Gygi S.P."/>
        </authorList>
    </citation>
    <scope>PHOSPHORYLATION [LARGE SCALE ANALYSIS] AT SER-29; SER-31; SER-424; THR-588; THR-1045 AND SER-1047</scope>
    <scope>IDENTIFICATION BY MASS SPECTROMETRY</scope>
    <source>
        <tissue>Embryo</tissue>
    </source>
</reference>
<evidence type="ECO:0000255" key="1"/>
<evidence type="ECO:0000255" key="2">
    <source>
        <dbReference type="PROSITE-ProRule" id="PRU00159"/>
    </source>
</evidence>
<evidence type="ECO:0000255" key="3">
    <source>
        <dbReference type="PROSITE-ProRule" id="PRU00618"/>
    </source>
</evidence>
<evidence type="ECO:0000256" key="4">
    <source>
        <dbReference type="SAM" id="MobiDB-lite"/>
    </source>
</evidence>
<evidence type="ECO:0000269" key="5">
    <source>
    </source>
</evidence>
<evidence type="ECO:0000269" key="6">
    <source>
    </source>
</evidence>
<evidence type="ECO:0000269" key="7">
    <source>
    </source>
</evidence>
<evidence type="ECO:0000269" key="8">
    <source>
    </source>
</evidence>
<evidence type="ECO:0000269" key="9">
    <source>
    </source>
</evidence>
<evidence type="ECO:0000269" key="10">
    <source>
    </source>
</evidence>
<evidence type="ECO:0000269" key="11">
    <source>
    </source>
</evidence>
<evidence type="ECO:0000269" key="12">
    <source>
    </source>
</evidence>
<evidence type="ECO:0000269" key="13">
    <source>
    </source>
</evidence>
<evidence type="ECO:0000269" key="14">
    <source>
    </source>
</evidence>
<evidence type="ECO:0000305" key="15"/>
<evidence type="ECO:0000312" key="16">
    <source>
        <dbReference type="EMBL" id="AAD48407.1"/>
    </source>
</evidence>
<evidence type="ECO:0000312" key="17">
    <source>
        <dbReference type="EMBL" id="AAF50105.1"/>
    </source>
</evidence>
<evidence type="ECO:0000312" key="18">
    <source>
        <dbReference type="EMBL" id="AAL28591.1"/>
    </source>
</evidence>
<evidence type="ECO:0000312" key="19">
    <source>
        <dbReference type="FlyBase" id="FBgn0020412"/>
    </source>
</evidence>
<protein>
    <recommendedName>
        <fullName>Chromosomal serine/threonine-protein kinase JIL-1</fullName>
        <ecNumber>2.7.11.1</ecNumber>
    </recommendedName>
</protein>
<proteinExistence type="evidence at protein level"/>
<organism>
    <name type="scientific">Drosophila melanogaster</name>
    <name type="common">Fruit fly</name>
    <dbReference type="NCBI Taxonomy" id="7227"/>
    <lineage>
        <taxon>Eukaryota</taxon>
        <taxon>Metazoa</taxon>
        <taxon>Ecdysozoa</taxon>
        <taxon>Arthropoda</taxon>
        <taxon>Hexapoda</taxon>
        <taxon>Insecta</taxon>
        <taxon>Pterygota</taxon>
        <taxon>Neoptera</taxon>
        <taxon>Endopterygota</taxon>
        <taxon>Diptera</taxon>
        <taxon>Brachycera</taxon>
        <taxon>Muscomorpha</taxon>
        <taxon>Ephydroidea</taxon>
        <taxon>Drosophilidae</taxon>
        <taxon>Drosophila</taxon>
        <taxon>Sophophora</taxon>
    </lineage>
</organism>
<keyword id="KW-0067">ATP-binding</keyword>
<keyword id="KW-0156">Chromatin regulator</keyword>
<keyword id="KW-0158">Chromosome</keyword>
<keyword id="KW-0217">Developmental protein</keyword>
<keyword id="KW-0418">Kinase</keyword>
<keyword id="KW-0460">Magnesium</keyword>
<keyword id="KW-0547">Nucleotide-binding</keyword>
<keyword id="KW-0539">Nucleus</keyword>
<keyword id="KW-0597">Phosphoprotein</keyword>
<keyword id="KW-1185">Reference proteome</keyword>
<keyword id="KW-0677">Repeat</keyword>
<keyword id="KW-0723">Serine/threonine-protein kinase</keyword>
<keyword id="KW-0804">Transcription</keyword>
<keyword id="KW-0805">Transcription regulation</keyword>
<keyword id="KW-0808">Transferase</keyword>
<dbReference type="EC" id="2.7.11.1"/>
<dbReference type="EMBL" id="AF142061">
    <property type="protein sequence ID" value="AAD48407.1"/>
    <property type="molecule type" value="mRNA"/>
</dbReference>
<dbReference type="EMBL" id="AE014296">
    <property type="protein sequence ID" value="AAF50105.1"/>
    <property type="molecule type" value="Genomic_DNA"/>
</dbReference>
<dbReference type="EMBL" id="AE014296">
    <property type="protein sequence ID" value="AAN11898.1"/>
    <property type="molecule type" value="Genomic_DNA"/>
</dbReference>
<dbReference type="EMBL" id="BT044484">
    <property type="protein sequence ID" value="ACH95258.1"/>
    <property type="molecule type" value="mRNA"/>
</dbReference>
<dbReference type="EMBL" id="AY061043">
    <property type="protein sequence ID" value="AAL28591.1"/>
    <property type="status" value="ALT_INIT"/>
    <property type="molecule type" value="mRNA"/>
</dbReference>
<dbReference type="RefSeq" id="NP_001261697.1">
    <property type="nucleotide sequence ID" value="NM_001274768.1"/>
</dbReference>
<dbReference type="RefSeq" id="NP_648432.1">
    <property type="nucleotide sequence ID" value="NM_140175.3"/>
</dbReference>
<dbReference type="RefSeq" id="NP_729661.1">
    <property type="nucleotide sequence ID" value="NM_168439.2"/>
</dbReference>
<dbReference type="SMR" id="Q9V3I5"/>
<dbReference type="BioGRID" id="64615">
    <property type="interactions" value="14"/>
</dbReference>
<dbReference type="FunCoup" id="Q9V3I5">
    <property type="interactions" value="1180"/>
</dbReference>
<dbReference type="IntAct" id="Q9V3I5">
    <property type="interactions" value="106"/>
</dbReference>
<dbReference type="STRING" id="7227.FBpp0304953"/>
<dbReference type="iPTMnet" id="Q9V3I5"/>
<dbReference type="PaxDb" id="7227-FBpp0304953"/>
<dbReference type="DNASU" id="39241"/>
<dbReference type="EnsemblMetazoa" id="FBtr0076236">
    <property type="protein sequence ID" value="FBpp0075965"/>
    <property type="gene ID" value="FBgn0020412"/>
</dbReference>
<dbReference type="EnsemblMetazoa" id="FBtr0076237">
    <property type="protein sequence ID" value="FBpp0075966"/>
    <property type="gene ID" value="FBgn0020412"/>
</dbReference>
<dbReference type="EnsemblMetazoa" id="FBtr0332707">
    <property type="protein sequence ID" value="FBpp0304953"/>
    <property type="gene ID" value="FBgn0020412"/>
</dbReference>
<dbReference type="GeneID" id="39241"/>
<dbReference type="KEGG" id="dme:Dmel_CG6297"/>
<dbReference type="AGR" id="FB:FBgn0020412"/>
<dbReference type="CTD" id="39241"/>
<dbReference type="FlyBase" id="FBgn0020412">
    <property type="gene designation" value="JIL-1"/>
</dbReference>
<dbReference type="VEuPathDB" id="VectorBase:FBgn0020412"/>
<dbReference type="eggNOG" id="KOG0603">
    <property type="taxonomic scope" value="Eukaryota"/>
</dbReference>
<dbReference type="GeneTree" id="ENSGT00940000167362"/>
<dbReference type="HOGENOM" id="CLU_003357_0_0_1"/>
<dbReference type="InParanoid" id="Q9V3I5"/>
<dbReference type="OMA" id="RRDNHCQ"/>
<dbReference type="OrthoDB" id="63267at2759"/>
<dbReference type="PhylomeDB" id="Q9V3I5"/>
<dbReference type="Reactome" id="R-DME-198753">
    <property type="pathway name" value="ERK/MAPK targets"/>
</dbReference>
<dbReference type="Reactome" id="R-DME-199920">
    <property type="pathway name" value="CREB phosphorylation"/>
</dbReference>
<dbReference type="Reactome" id="R-DME-375165">
    <property type="pathway name" value="NCAM signaling for neurite out-growth"/>
</dbReference>
<dbReference type="Reactome" id="R-DME-5621575">
    <property type="pathway name" value="CD209 (DC-SIGN) signaling"/>
</dbReference>
<dbReference type="BioGRID-ORCS" id="39241">
    <property type="hits" value="0 hits in 3 CRISPR screens"/>
</dbReference>
<dbReference type="GenomeRNAi" id="39241"/>
<dbReference type="PRO" id="PR:Q9V3I5"/>
<dbReference type="Proteomes" id="UP000000803">
    <property type="component" value="Chromosome 3L"/>
</dbReference>
<dbReference type="Bgee" id="FBgn0020412">
    <property type="expression patterns" value="Expressed in dorsal appendage forming follicle cell in ovary and 278 other cell types or tissues"/>
</dbReference>
<dbReference type="ExpressionAtlas" id="Q9V3I5">
    <property type="expression patterns" value="baseline and differential"/>
</dbReference>
<dbReference type="GO" id="GO:0000785">
    <property type="term" value="C:chromatin"/>
    <property type="evidence" value="ECO:0000314"/>
    <property type="project" value="FlyBase"/>
</dbReference>
<dbReference type="GO" id="GO:0005737">
    <property type="term" value="C:cytoplasm"/>
    <property type="evidence" value="ECO:0000318"/>
    <property type="project" value="GO_Central"/>
</dbReference>
<dbReference type="GO" id="GO:0000228">
    <property type="term" value="C:nuclear chromosome"/>
    <property type="evidence" value="ECO:0000314"/>
    <property type="project" value="UniProtKB"/>
</dbReference>
<dbReference type="GO" id="GO:0005654">
    <property type="term" value="C:nucleoplasm"/>
    <property type="evidence" value="ECO:0000318"/>
    <property type="project" value="GO_Central"/>
</dbReference>
<dbReference type="GO" id="GO:0005634">
    <property type="term" value="C:nucleus"/>
    <property type="evidence" value="ECO:0007005"/>
    <property type="project" value="FlyBase"/>
</dbReference>
<dbReference type="GO" id="GO:0005700">
    <property type="term" value="C:polytene chromosome"/>
    <property type="evidence" value="ECO:0000314"/>
    <property type="project" value="FlyBase"/>
</dbReference>
<dbReference type="GO" id="GO:0005705">
    <property type="term" value="C:polytene chromosome interband"/>
    <property type="evidence" value="ECO:0000314"/>
    <property type="project" value="UniProtKB"/>
</dbReference>
<dbReference type="GO" id="GO:0005703">
    <property type="term" value="C:polytene chromosome puff"/>
    <property type="evidence" value="ECO:0000314"/>
    <property type="project" value="FlyBase"/>
</dbReference>
<dbReference type="GO" id="GO:0016456">
    <property type="term" value="C:X chromosome located dosage compensation complex, transcription activating"/>
    <property type="evidence" value="ECO:0000353"/>
    <property type="project" value="UniProtKB"/>
</dbReference>
<dbReference type="GO" id="GO:0005524">
    <property type="term" value="F:ATP binding"/>
    <property type="evidence" value="ECO:0007669"/>
    <property type="project" value="UniProtKB-KW"/>
</dbReference>
<dbReference type="GO" id="GO:0035175">
    <property type="term" value="F:histone H3S10 kinase activity"/>
    <property type="evidence" value="ECO:0000315"/>
    <property type="project" value="UniProtKB"/>
</dbReference>
<dbReference type="GO" id="GO:0106310">
    <property type="term" value="F:protein serine kinase activity"/>
    <property type="evidence" value="ECO:0007669"/>
    <property type="project" value="RHEA"/>
</dbReference>
<dbReference type="GO" id="GO:0004674">
    <property type="term" value="F:protein serine/threonine kinase activity"/>
    <property type="evidence" value="ECO:0000314"/>
    <property type="project" value="FlyBase"/>
</dbReference>
<dbReference type="GO" id="GO:0006325">
    <property type="term" value="P:chromatin organization"/>
    <property type="evidence" value="ECO:0000315"/>
    <property type="project" value="UniProtKB"/>
</dbReference>
<dbReference type="GO" id="GO:0051276">
    <property type="term" value="P:chromosome organization"/>
    <property type="evidence" value="ECO:0000315"/>
    <property type="project" value="FlyBase"/>
</dbReference>
<dbReference type="GO" id="GO:0033696">
    <property type="term" value="P:heterochromatin boundary formation"/>
    <property type="evidence" value="ECO:0000315"/>
    <property type="project" value="FlyBase"/>
</dbReference>
<dbReference type="GO" id="GO:0048477">
    <property type="term" value="P:oogenesis"/>
    <property type="evidence" value="ECO:0000315"/>
    <property type="project" value="FlyBase"/>
</dbReference>
<dbReference type="GO" id="GO:0043687">
    <property type="term" value="P:post-translational protein modification"/>
    <property type="evidence" value="ECO:0000314"/>
    <property type="project" value="UniProtKB"/>
</dbReference>
<dbReference type="GO" id="GO:0046777">
    <property type="term" value="P:protein autophosphorylation"/>
    <property type="evidence" value="ECO:0000314"/>
    <property type="project" value="UniProtKB"/>
</dbReference>
<dbReference type="GO" id="GO:0006355">
    <property type="term" value="P:regulation of DNA-templated transcription"/>
    <property type="evidence" value="ECO:0000318"/>
    <property type="project" value="GO_Central"/>
</dbReference>
<dbReference type="GO" id="GO:0000723">
    <property type="term" value="P:telomere maintenance"/>
    <property type="evidence" value="ECO:0000315"/>
    <property type="project" value="FlyBase"/>
</dbReference>
<dbReference type="GO" id="GO:0038202">
    <property type="term" value="P:TORC1 signaling"/>
    <property type="evidence" value="ECO:0000318"/>
    <property type="project" value="GO_Central"/>
</dbReference>
<dbReference type="CDD" id="cd05583">
    <property type="entry name" value="STKc_MSK_N"/>
    <property type="match status" value="1"/>
</dbReference>
<dbReference type="FunFam" id="3.30.200.20:FF:000455">
    <property type="entry name" value="Non-specific serine/threonine protein kinase"/>
    <property type="match status" value="1"/>
</dbReference>
<dbReference type="FunFam" id="1.10.510.10:FF:000109">
    <property type="entry name" value="Ribosomal protein S6 kinase"/>
    <property type="match status" value="1"/>
</dbReference>
<dbReference type="Gene3D" id="3.30.200.20">
    <property type="entry name" value="Phosphorylase Kinase, domain 1"/>
    <property type="match status" value="2"/>
</dbReference>
<dbReference type="Gene3D" id="1.10.510.10">
    <property type="entry name" value="Transferase(Phosphotransferase) domain 1"/>
    <property type="match status" value="2"/>
</dbReference>
<dbReference type="InterPro" id="IPR000961">
    <property type="entry name" value="AGC-kinase_C"/>
</dbReference>
<dbReference type="InterPro" id="IPR011009">
    <property type="entry name" value="Kinase-like_dom_sf"/>
</dbReference>
<dbReference type="InterPro" id="IPR000719">
    <property type="entry name" value="Prot_kinase_dom"/>
</dbReference>
<dbReference type="InterPro" id="IPR017441">
    <property type="entry name" value="Protein_kinase_ATP_BS"/>
</dbReference>
<dbReference type="InterPro" id="IPR008271">
    <property type="entry name" value="Ser/Thr_kinase_AS"/>
</dbReference>
<dbReference type="PANTHER" id="PTHR24351">
    <property type="entry name" value="RIBOSOMAL PROTEIN S6 KINASE"/>
    <property type="match status" value="1"/>
</dbReference>
<dbReference type="Pfam" id="PF00069">
    <property type="entry name" value="Pkinase"/>
    <property type="match status" value="2"/>
</dbReference>
<dbReference type="SMART" id="SM00133">
    <property type="entry name" value="S_TK_X"/>
    <property type="match status" value="1"/>
</dbReference>
<dbReference type="SMART" id="SM00220">
    <property type="entry name" value="S_TKc"/>
    <property type="match status" value="2"/>
</dbReference>
<dbReference type="SUPFAM" id="SSF56112">
    <property type="entry name" value="Protein kinase-like (PK-like)"/>
    <property type="match status" value="2"/>
</dbReference>
<dbReference type="PROSITE" id="PS51285">
    <property type="entry name" value="AGC_KINASE_CTER"/>
    <property type="match status" value="1"/>
</dbReference>
<dbReference type="PROSITE" id="PS00107">
    <property type="entry name" value="PROTEIN_KINASE_ATP"/>
    <property type="match status" value="1"/>
</dbReference>
<dbReference type="PROSITE" id="PS50011">
    <property type="entry name" value="PROTEIN_KINASE_DOM"/>
    <property type="match status" value="2"/>
</dbReference>
<dbReference type="PROSITE" id="PS00108">
    <property type="entry name" value="PROTEIN_KINASE_ST"/>
    <property type="match status" value="2"/>
</dbReference>
<accession>Q9V3I5</accession>
<accession>B5RJL0</accession>
<accession>Q0E8F9</accession>
<accession>Q95RY3</accession>